<proteinExistence type="inferred from homology"/>
<gene>
    <name evidence="1" type="primary">rpsH</name>
    <name type="ordered locus">Helmi_13440</name>
    <name type="ORF">HM1_1392</name>
</gene>
<evidence type="ECO:0000255" key="1">
    <source>
        <dbReference type="HAMAP-Rule" id="MF_01302"/>
    </source>
</evidence>
<evidence type="ECO:0000305" key="2"/>
<organism>
    <name type="scientific">Heliobacterium modesticaldum (strain ATCC 51547 / Ice1)</name>
    <dbReference type="NCBI Taxonomy" id="498761"/>
    <lineage>
        <taxon>Bacteria</taxon>
        <taxon>Bacillati</taxon>
        <taxon>Bacillota</taxon>
        <taxon>Clostridia</taxon>
        <taxon>Eubacteriales</taxon>
        <taxon>Heliobacteriaceae</taxon>
        <taxon>Heliomicrobium</taxon>
    </lineage>
</organism>
<accession>B0TC70</accession>
<sequence>MVMTDPIADFLTRIRNANMVYHDKVEVPASKVKRAIAEIFKNEGYVKDVEYVEDNKQGLLRIYLKFGPNREKVITGVKRISKPGLRVYARKEEIPKVLGGLGVAVLSTSQGIMSDKAARKAGLGGEVLCYIW</sequence>
<keyword id="KW-1185">Reference proteome</keyword>
<keyword id="KW-0687">Ribonucleoprotein</keyword>
<keyword id="KW-0689">Ribosomal protein</keyword>
<keyword id="KW-0694">RNA-binding</keyword>
<keyword id="KW-0699">rRNA-binding</keyword>
<protein>
    <recommendedName>
        <fullName evidence="1">Small ribosomal subunit protein uS8</fullName>
    </recommendedName>
    <alternativeName>
        <fullName evidence="2">30S ribosomal protein S8</fullName>
    </alternativeName>
</protein>
<feature type="chain" id="PRO_1000140564" description="Small ribosomal subunit protein uS8">
    <location>
        <begin position="1"/>
        <end position="132"/>
    </location>
</feature>
<name>RS8_HELMI</name>
<reference key="1">
    <citation type="journal article" date="2008" name="J. Bacteriol.">
        <title>The genome of Heliobacterium modesticaldum, a phototrophic representative of the Firmicutes containing the simplest photosynthetic apparatus.</title>
        <authorList>
            <person name="Sattley W.M."/>
            <person name="Madigan M.T."/>
            <person name="Swingley W.D."/>
            <person name="Cheung P.C."/>
            <person name="Clocksin K.M."/>
            <person name="Conrad A.L."/>
            <person name="Dejesa L.C."/>
            <person name="Honchak B.M."/>
            <person name="Jung D.O."/>
            <person name="Karbach L.E."/>
            <person name="Kurdoglu A."/>
            <person name="Lahiri S."/>
            <person name="Mastrian S.D."/>
            <person name="Page L.E."/>
            <person name="Taylor H.L."/>
            <person name="Wang Z.T."/>
            <person name="Raymond J."/>
            <person name="Chen M."/>
            <person name="Blankenship R.E."/>
            <person name="Touchman J.W."/>
        </authorList>
    </citation>
    <scope>NUCLEOTIDE SEQUENCE [LARGE SCALE GENOMIC DNA]</scope>
    <source>
        <strain>ATCC 51547 / Ice1</strain>
    </source>
</reference>
<comment type="function">
    <text evidence="1">One of the primary rRNA binding proteins, it binds directly to 16S rRNA central domain where it helps coordinate assembly of the platform of the 30S subunit.</text>
</comment>
<comment type="subunit">
    <text evidence="1">Part of the 30S ribosomal subunit. Contacts proteins S5 and S12.</text>
</comment>
<comment type="similarity">
    <text evidence="1">Belongs to the universal ribosomal protein uS8 family.</text>
</comment>
<dbReference type="EMBL" id="CP000930">
    <property type="protein sequence ID" value="ABZ83969.1"/>
    <property type="molecule type" value="Genomic_DNA"/>
</dbReference>
<dbReference type="RefSeq" id="WP_012282485.1">
    <property type="nucleotide sequence ID" value="NC_010337.2"/>
</dbReference>
<dbReference type="SMR" id="B0TC70"/>
<dbReference type="STRING" id="498761.HM1_1392"/>
<dbReference type="KEGG" id="hmo:HM1_1392"/>
<dbReference type="eggNOG" id="COG0096">
    <property type="taxonomic scope" value="Bacteria"/>
</dbReference>
<dbReference type="HOGENOM" id="CLU_098428_0_2_9"/>
<dbReference type="OrthoDB" id="9802617at2"/>
<dbReference type="Proteomes" id="UP000008550">
    <property type="component" value="Chromosome"/>
</dbReference>
<dbReference type="GO" id="GO:1990904">
    <property type="term" value="C:ribonucleoprotein complex"/>
    <property type="evidence" value="ECO:0007669"/>
    <property type="project" value="UniProtKB-KW"/>
</dbReference>
<dbReference type="GO" id="GO:0005840">
    <property type="term" value="C:ribosome"/>
    <property type="evidence" value="ECO:0007669"/>
    <property type="project" value="UniProtKB-KW"/>
</dbReference>
<dbReference type="GO" id="GO:0019843">
    <property type="term" value="F:rRNA binding"/>
    <property type="evidence" value="ECO:0007669"/>
    <property type="project" value="UniProtKB-UniRule"/>
</dbReference>
<dbReference type="GO" id="GO:0003735">
    <property type="term" value="F:structural constituent of ribosome"/>
    <property type="evidence" value="ECO:0007669"/>
    <property type="project" value="InterPro"/>
</dbReference>
<dbReference type="GO" id="GO:0006412">
    <property type="term" value="P:translation"/>
    <property type="evidence" value="ECO:0007669"/>
    <property type="project" value="UniProtKB-UniRule"/>
</dbReference>
<dbReference type="FunFam" id="3.30.1370.30:FF:000002">
    <property type="entry name" value="30S ribosomal protein S8"/>
    <property type="match status" value="1"/>
</dbReference>
<dbReference type="FunFam" id="3.30.1490.10:FF:000001">
    <property type="entry name" value="30S ribosomal protein S8"/>
    <property type="match status" value="1"/>
</dbReference>
<dbReference type="Gene3D" id="3.30.1370.30">
    <property type="match status" value="1"/>
</dbReference>
<dbReference type="Gene3D" id="3.30.1490.10">
    <property type="match status" value="1"/>
</dbReference>
<dbReference type="HAMAP" id="MF_01302_B">
    <property type="entry name" value="Ribosomal_uS8_B"/>
    <property type="match status" value="1"/>
</dbReference>
<dbReference type="InterPro" id="IPR000630">
    <property type="entry name" value="Ribosomal_uS8"/>
</dbReference>
<dbReference type="InterPro" id="IPR047863">
    <property type="entry name" value="Ribosomal_uS8_CS"/>
</dbReference>
<dbReference type="InterPro" id="IPR035987">
    <property type="entry name" value="Ribosomal_uS8_sf"/>
</dbReference>
<dbReference type="NCBIfam" id="NF001109">
    <property type="entry name" value="PRK00136.1"/>
    <property type="match status" value="1"/>
</dbReference>
<dbReference type="PANTHER" id="PTHR11758">
    <property type="entry name" value="40S RIBOSOMAL PROTEIN S15A"/>
    <property type="match status" value="1"/>
</dbReference>
<dbReference type="Pfam" id="PF00410">
    <property type="entry name" value="Ribosomal_S8"/>
    <property type="match status" value="1"/>
</dbReference>
<dbReference type="SUPFAM" id="SSF56047">
    <property type="entry name" value="Ribosomal protein S8"/>
    <property type="match status" value="1"/>
</dbReference>
<dbReference type="PROSITE" id="PS00053">
    <property type="entry name" value="RIBOSOMAL_S8"/>
    <property type="match status" value="1"/>
</dbReference>